<accession>Q9X0H9</accession>
<name>Y1094_THEMA</name>
<sequence length="439" mass="50257">MLEQVRIQKMVNGGYGLAHLSNGKVVLVEGAYPGEEVLIKTYREKRDFSFGKVVSLLKESEDRIKPPCRYFGRCGGCHWMDVKYETQLRYKKEVLIDLFERSNLKVEVEDVEPSDLVFHYRTKMEFHFQGRKLGLKKRNSDFVIDIKDCEVAPEGTGEILNTVKEAVQVLNVPVYNWETRKGVLKHLVIRYAFSTDQFMVIFVTKTESFPWGRDLVRAVLKRFPKIHSIIHVMNSKDSVVLRGPYKTLYGEGVIVEEFDWERFQIPPTAFFQSNYSITSKLIDHVYREQALQGNEVVLDLYAGIGTFSVRTSFSAARVISVESSRVAVKAGKANANINSRKNIEYVEQDVLDFLKNYSGRADRIILDPPRSGAGPEVMKEIARLSPERIVYVSCDPSTLVRDLKVLVENGYSIVRVKPFDMFPQTYHVETAVTLVKGDR</sequence>
<evidence type="ECO:0000250" key="1"/>
<evidence type="ECO:0000255" key="2">
    <source>
        <dbReference type="PROSITE-ProRule" id="PRU00208"/>
    </source>
</evidence>
<evidence type="ECO:0000255" key="3">
    <source>
        <dbReference type="PROSITE-ProRule" id="PRU01024"/>
    </source>
</evidence>
<organism>
    <name type="scientific">Thermotoga maritima (strain ATCC 43589 / DSM 3109 / JCM 10099 / NBRC 100826 / MSB8)</name>
    <dbReference type="NCBI Taxonomy" id="243274"/>
    <lineage>
        <taxon>Bacteria</taxon>
        <taxon>Thermotogati</taxon>
        <taxon>Thermotogota</taxon>
        <taxon>Thermotogae</taxon>
        <taxon>Thermotogales</taxon>
        <taxon>Thermotogaceae</taxon>
        <taxon>Thermotoga</taxon>
    </lineage>
</organism>
<gene>
    <name type="ordered locus">TM_1094</name>
</gene>
<keyword id="KW-0004">4Fe-4S</keyword>
<keyword id="KW-0408">Iron</keyword>
<keyword id="KW-0411">Iron-sulfur</keyword>
<keyword id="KW-0479">Metal-binding</keyword>
<keyword id="KW-0489">Methyltransferase</keyword>
<keyword id="KW-1185">Reference proteome</keyword>
<keyword id="KW-0949">S-adenosyl-L-methionine</keyword>
<keyword id="KW-0808">Transferase</keyword>
<dbReference type="EC" id="2.1.1.-"/>
<dbReference type="EMBL" id="AE000512">
    <property type="protein sequence ID" value="AAD36170.1"/>
    <property type="molecule type" value="Genomic_DNA"/>
</dbReference>
<dbReference type="PIR" id="E72298">
    <property type="entry name" value="E72298"/>
</dbReference>
<dbReference type="RefSeq" id="NP_228900.1">
    <property type="nucleotide sequence ID" value="NC_000853.1"/>
</dbReference>
<dbReference type="RefSeq" id="WP_004080361.1">
    <property type="nucleotide sequence ID" value="NC_000853.1"/>
</dbReference>
<dbReference type="SMR" id="Q9X0H9"/>
<dbReference type="FunCoup" id="Q9X0H9">
    <property type="interactions" value="462"/>
</dbReference>
<dbReference type="STRING" id="243274.TM_1094"/>
<dbReference type="PaxDb" id="243274-THEMA_08880"/>
<dbReference type="EnsemblBacteria" id="AAD36170">
    <property type="protein sequence ID" value="AAD36170"/>
    <property type="gene ID" value="TM_1094"/>
</dbReference>
<dbReference type="KEGG" id="tma:TM1094"/>
<dbReference type="KEGG" id="tmi:THEMA_08880"/>
<dbReference type="KEGG" id="tmm:Tmari_1099"/>
<dbReference type="KEGG" id="tmw:THMA_1117"/>
<dbReference type="eggNOG" id="COG2265">
    <property type="taxonomic scope" value="Bacteria"/>
</dbReference>
<dbReference type="InParanoid" id="Q9X0H9"/>
<dbReference type="OrthoDB" id="9804590at2"/>
<dbReference type="Proteomes" id="UP000008183">
    <property type="component" value="Chromosome"/>
</dbReference>
<dbReference type="GO" id="GO:0051539">
    <property type="term" value="F:4 iron, 4 sulfur cluster binding"/>
    <property type="evidence" value="ECO:0007669"/>
    <property type="project" value="UniProtKB-KW"/>
</dbReference>
<dbReference type="GO" id="GO:0046872">
    <property type="term" value="F:metal ion binding"/>
    <property type="evidence" value="ECO:0007669"/>
    <property type="project" value="UniProtKB-KW"/>
</dbReference>
<dbReference type="GO" id="GO:0070041">
    <property type="term" value="F:rRNA (uridine-C5-)-methyltransferase activity"/>
    <property type="evidence" value="ECO:0000318"/>
    <property type="project" value="GO_Central"/>
</dbReference>
<dbReference type="GO" id="GO:0070475">
    <property type="term" value="P:rRNA base methylation"/>
    <property type="evidence" value="ECO:0000318"/>
    <property type="project" value="GO_Central"/>
</dbReference>
<dbReference type="CDD" id="cd02440">
    <property type="entry name" value="AdoMet_MTases"/>
    <property type="match status" value="1"/>
</dbReference>
<dbReference type="FunFam" id="3.40.50.150:FF:000009">
    <property type="entry name" value="23S rRNA (Uracil(1939)-C(5))-methyltransferase RlmD"/>
    <property type="match status" value="1"/>
</dbReference>
<dbReference type="Gene3D" id="2.40.50.1070">
    <property type="match status" value="1"/>
</dbReference>
<dbReference type="Gene3D" id="2.40.50.140">
    <property type="entry name" value="Nucleic acid-binding proteins"/>
    <property type="match status" value="1"/>
</dbReference>
<dbReference type="Gene3D" id="3.40.50.150">
    <property type="entry name" value="Vaccinia Virus protein VP39"/>
    <property type="match status" value="1"/>
</dbReference>
<dbReference type="InterPro" id="IPR030390">
    <property type="entry name" value="MeTrfase_TrmA_AS"/>
</dbReference>
<dbReference type="InterPro" id="IPR030391">
    <property type="entry name" value="MeTrfase_TrmA_CS"/>
</dbReference>
<dbReference type="InterPro" id="IPR012340">
    <property type="entry name" value="NA-bd_OB-fold"/>
</dbReference>
<dbReference type="InterPro" id="IPR029063">
    <property type="entry name" value="SAM-dependent_MTases_sf"/>
</dbReference>
<dbReference type="InterPro" id="IPR002792">
    <property type="entry name" value="TRAM_dom"/>
</dbReference>
<dbReference type="InterPro" id="IPR010280">
    <property type="entry name" value="U5_MeTrfase_fam"/>
</dbReference>
<dbReference type="NCBIfam" id="TIGR00479">
    <property type="entry name" value="rumA"/>
    <property type="match status" value="1"/>
</dbReference>
<dbReference type="PANTHER" id="PTHR11061">
    <property type="entry name" value="RNA M5U METHYLTRANSFERASE"/>
    <property type="match status" value="1"/>
</dbReference>
<dbReference type="PANTHER" id="PTHR11061:SF30">
    <property type="entry name" value="TRNA (URACIL(54)-C(5))-METHYLTRANSFERASE"/>
    <property type="match status" value="1"/>
</dbReference>
<dbReference type="Pfam" id="PF05958">
    <property type="entry name" value="tRNA_U5-meth_tr"/>
    <property type="match status" value="1"/>
</dbReference>
<dbReference type="SUPFAM" id="SSF50249">
    <property type="entry name" value="Nucleic acid-binding proteins"/>
    <property type="match status" value="1"/>
</dbReference>
<dbReference type="SUPFAM" id="SSF53335">
    <property type="entry name" value="S-adenosyl-L-methionine-dependent methyltransferases"/>
    <property type="match status" value="1"/>
</dbReference>
<dbReference type="PROSITE" id="PS51687">
    <property type="entry name" value="SAM_MT_RNA_M5U"/>
    <property type="match status" value="1"/>
</dbReference>
<dbReference type="PROSITE" id="PS50926">
    <property type="entry name" value="TRAM"/>
    <property type="match status" value="1"/>
</dbReference>
<dbReference type="PROSITE" id="PS01230">
    <property type="entry name" value="TRMA_1"/>
    <property type="match status" value="1"/>
</dbReference>
<dbReference type="PROSITE" id="PS01231">
    <property type="entry name" value="TRMA_2"/>
    <property type="match status" value="1"/>
</dbReference>
<reference key="1">
    <citation type="journal article" date="1999" name="Nature">
        <title>Evidence for lateral gene transfer between Archaea and Bacteria from genome sequence of Thermotoga maritima.</title>
        <authorList>
            <person name="Nelson K.E."/>
            <person name="Clayton R.A."/>
            <person name="Gill S.R."/>
            <person name="Gwinn M.L."/>
            <person name="Dodson R.J."/>
            <person name="Haft D.H."/>
            <person name="Hickey E.K."/>
            <person name="Peterson J.D."/>
            <person name="Nelson W.C."/>
            <person name="Ketchum K.A."/>
            <person name="McDonald L.A."/>
            <person name="Utterback T.R."/>
            <person name="Malek J.A."/>
            <person name="Linher K.D."/>
            <person name="Garrett M.M."/>
            <person name="Stewart A.M."/>
            <person name="Cotton M.D."/>
            <person name="Pratt M.S."/>
            <person name="Phillips C.A."/>
            <person name="Richardson D.L."/>
            <person name="Heidelberg J.F."/>
            <person name="Sutton G.G."/>
            <person name="Fleischmann R.D."/>
            <person name="Eisen J.A."/>
            <person name="White O."/>
            <person name="Salzberg S.L."/>
            <person name="Smith H.O."/>
            <person name="Venter J.C."/>
            <person name="Fraser C.M."/>
        </authorList>
    </citation>
    <scope>NUCLEOTIDE SEQUENCE [LARGE SCALE GENOMIC DNA]</scope>
    <source>
        <strain>ATCC 43589 / DSM 3109 / JCM 10099 / NBRC 100826 / MSB8</strain>
    </source>
</reference>
<protein>
    <recommendedName>
        <fullName>Uncharacterized RNA methyltransferase TM_1094</fullName>
        <ecNumber>2.1.1.-</ecNumber>
    </recommendedName>
</protein>
<feature type="chain" id="PRO_0000162046" description="Uncharacterized RNA methyltransferase TM_1094">
    <location>
        <begin position="1"/>
        <end position="439"/>
    </location>
</feature>
<feature type="domain" description="TRAM" evidence="2">
    <location>
        <begin position="1"/>
        <end position="55"/>
    </location>
</feature>
<feature type="active site" description="Nucleophile" evidence="3">
    <location>
        <position position="394"/>
    </location>
</feature>
<feature type="binding site" evidence="1">
    <location>
        <position position="68"/>
    </location>
    <ligand>
        <name>[4Fe-4S] cluster</name>
        <dbReference type="ChEBI" id="CHEBI:49883"/>
    </ligand>
</feature>
<feature type="binding site" evidence="1">
    <location>
        <position position="74"/>
    </location>
    <ligand>
        <name>[4Fe-4S] cluster</name>
        <dbReference type="ChEBI" id="CHEBI:49883"/>
    </ligand>
</feature>
<feature type="binding site" evidence="1">
    <location>
        <position position="77"/>
    </location>
    <ligand>
        <name>[4Fe-4S] cluster</name>
        <dbReference type="ChEBI" id="CHEBI:49883"/>
    </ligand>
</feature>
<feature type="binding site" evidence="1">
    <location>
        <position position="149"/>
    </location>
    <ligand>
        <name>[4Fe-4S] cluster</name>
        <dbReference type="ChEBI" id="CHEBI:49883"/>
    </ligand>
</feature>
<feature type="binding site" evidence="3">
    <location>
        <position position="272"/>
    </location>
    <ligand>
        <name>S-adenosyl-L-methionine</name>
        <dbReference type="ChEBI" id="CHEBI:59789"/>
    </ligand>
</feature>
<feature type="binding site" evidence="3">
    <location>
        <position position="301"/>
    </location>
    <ligand>
        <name>S-adenosyl-L-methionine</name>
        <dbReference type="ChEBI" id="CHEBI:59789"/>
    </ligand>
</feature>
<feature type="binding site" evidence="3">
    <location>
        <position position="322"/>
    </location>
    <ligand>
        <name>S-adenosyl-L-methionine</name>
        <dbReference type="ChEBI" id="CHEBI:59789"/>
    </ligand>
</feature>
<feature type="binding site" evidence="3">
    <location>
        <position position="367"/>
    </location>
    <ligand>
        <name>S-adenosyl-L-methionine</name>
        <dbReference type="ChEBI" id="CHEBI:59789"/>
    </ligand>
</feature>
<comment type="similarity">
    <text evidence="3">Belongs to the class I-like SAM-binding methyltransferase superfamily. RNA M5U methyltransferase family.</text>
</comment>
<proteinExistence type="inferred from homology"/>